<reference key="1">
    <citation type="journal article" date="2004" name="Nat. Genet.">
        <title>Complete sequencing and characterization of 21,243 full-length human cDNAs.</title>
        <authorList>
            <person name="Ota T."/>
            <person name="Suzuki Y."/>
            <person name="Nishikawa T."/>
            <person name="Otsuki T."/>
            <person name="Sugiyama T."/>
            <person name="Irie R."/>
            <person name="Wakamatsu A."/>
            <person name="Hayashi K."/>
            <person name="Sato H."/>
            <person name="Nagai K."/>
            <person name="Kimura K."/>
            <person name="Makita H."/>
            <person name="Sekine M."/>
            <person name="Obayashi M."/>
            <person name="Nishi T."/>
            <person name="Shibahara T."/>
            <person name="Tanaka T."/>
            <person name="Ishii S."/>
            <person name="Yamamoto J."/>
            <person name="Saito K."/>
            <person name="Kawai Y."/>
            <person name="Isono Y."/>
            <person name="Nakamura Y."/>
            <person name="Nagahari K."/>
            <person name="Murakami K."/>
            <person name="Yasuda T."/>
            <person name="Iwayanagi T."/>
            <person name="Wagatsuma M."/>
            <person name="Shiratori A."/>
            <person name="Sudo H."/>
            <person name="Hosoiri T."/>
            <person name="Kaku Y."/>
            <person name="Kodaira H."/>
            <person name="Kondo H."/>
            <person name="Sugawara M."/>
            <person name="Takahashi M."/>
            <person name="Kanda K."/>
            <person name="Yokoi T."/>
            <person name="Furuya T."/>
            <person name="Kikkawa E."/>
            <person name="Omura Y."/>
            <person name="Abe K."/>
            <person name="Kamihara K."/>
            <person name="Katsuta N."/>
            <person name="Sato K."/>
            <person name="Tanikawa M."/>
            <person name="Yamazaki M."/>
            <person name="Ninomiya K."/>
            <person name="Ishibashi T."/>
            <person name="Yamashita H."/>
            <person name="Murakawa K."/>
            <person name="Fujimori K."/>
            <person name="Tanai H."/>
            <person name="Kimata M."/>
            <person name="Watanabe M."/>
            <person name="Hiraoka S."/>
            <person name="Chiba Y."/>
            <person name="Ishida S."/>
            <person name="Ono Y."/>
            <person name="Takiguchi S."/>
            <person name="Watanabe S."/>
            <person name="Yosida M."/>
            <person name="Hotuta T."/>
            <person name="Kusano J."/>
            <person name="Kanehori K."/>
            <person name="Takahashi-Fujii A."/>
            <person name="Hara H."/>
            <person name="Tanase T.-O."/>
            <person name="Nomura Y."/>
            <person name="Togiya S."/>
            <person name="Komai F."/>
            <person name="Hara R."/>
            <person name="Takeuchi K."/>
            <person name="Arita M."/>
            <person name="Imose N."/>
            <person name="Musashino K."/>
            <person name="Yuuki H."/>
            <person name="Oshima A."/>
            <person name="Sasaki N."/>
            <person name="Aotsuka S."/>
            <person name="Yoshikawa Y."/>
            <person name="Matsunawa H."/>
            <person name="Ichihara T."/>
            <person name="Shiohata N."/>
            <person name="Sano S."/>
            <person name="Moriya S."/>
            <person name="Momiyama H."/>
            <person name="Satoh N."/>
            <person name="Takami S."/>
            <person name="Terashima Y."/>
            <person name="Suzuki O."/>
            <person name="Nakagawa S."/>
            <person name="Senoh A."/>
            <person name="Mizoguchi H."/>
            <person name="Goto Y."/>
            <person name="Shimizu F."/>
            <person name="Wakebe H."/>
            <person name="Hishigaki H."/>
            <person name="Watanabe T."/>
            <person name="Sugiyama A."/>
            <person name="Takemoto M."/>
            <person name="Kawakami B."/>
            <person name="Yamazaki M."/>
            <person name="Watanabe K."/>
            <person name="Kumagai A."/>
            <person name="Itakura S."/>
            <person name="Fukuzumi Y."/>
            <person name="Fujimori Y."/>
            <person name="Komiyama M."/>
            <person name="Tashiro H."/>
            <person name="Tanigami A."/>
            <person name="Fujiwara T."/>
            <person name="Ono T."/>
            <person name="Yamada K."/>
            <person name="Fujii Y."/>
            <person name="Ozaki K."/>
            <person name="Hirao M."/>
            <person name="Ohmori Y."/>
            <person name="Kawabata A."/>
            <person name="Hikiji T."/>
            <person name="Kobatake N."/>
            <person name="Inagaki H."/>
            <person name="Ikema Y."/>
            <person name="Okamoto S."/>
            <person name="Okitani R."/>
            <person name="Kawakami T."/>
            <person name="Noguchi S."/>
            <person name="Itoh T."/>
            <person name="Shigeta K."/>
            <person name="Senba T."/>
            <person name="Matsumura K."/>
            <person name="Nakajima Y."/>
            <person name="Mizuno T."/>
            <person name="Morinaga M."/>
            <person name="Sasaki M."/>
            <person name="Togashi T."/>
            <person name="Oyama M."/>
            <person name="Hata H."/>
            <person name="Watanabe M."/>
            <person name="Komatsu T."/>
            <person name="Mizushima-Sugano J."/>
            <person name="Satoh T."/>
            <person name="Shirai Y."/>
            <person name="Takahashi Y."/>
            <person name="Nakagawa K."/>
            <person name="Okumura K."/>
            <person name="Nagase T."/>
            <person name="Nomura N."/>
            <person name="Kikuchi H."/>
            <person name="Masuho Y."/>
            <person name="Yamashita R."/>
            <person name="Nakai K."/>
            <person name="Yada T."/>
            <person name="Nakamura Y."/>
            <person name="Ohara O."/>
            <person name="Isogai T."/>
            <person name="Sugano S."/>
        </authorList>
    </citation>
    <scope>NUCLEOTIDE SEQUENCE [LARGE SCALE MRNA]</scope>
    <source>
        <tissue>Testis</tissue>
    </source>
</reference>
<evidence type="ECO:0000256" key="1">
    <source>
        <dbReference type="SAM" id="MobiDB-lite"/>
    </source>
</evidence>
<evidence type="ECO:0000305" key="2"/>
<feature type="chain" id="PRO_0000332164" description="Putative uncharacterized protein FLJ43944">
    <location>
        <begin position="1"/>
        <end position="221"/>
    </location>
</feature>
<feature type="region of interest" description="Disordered" evidence="1">
    <location>
        <begin position="40"/>
        <end position="162"/>
    </location>
</feature>
<feature type="compositionally biased region" description="Polar residues" evidence="1">
    <location>
        <begin position="47"/>
        <end position="60"/>
    </location>
</feature>
<feature type="compositionally biased region" description="Low complexity" evidence="1">
    <location>
        <begin position="82"/>
        <end position="92"/>
    </location>
</feature>
<proteinExistence type="uncertain"/>
<dbReference type="EMBL" id="AK128235">
    <property type="status" value="NOT_ANNOTATED_CDS"/>
    <property type="molecule type" value="mRNA"/>
</dbReference>
<dbReference type="SMR" id="Q6ZRG5"/>
<dbReference type="BioMuta" id="-"/>
<dbReference type="MassIVE" id="Q6ZRG5"/>
<dbReference type="PeptideAtlas" id="Q6ZRG5"/>
<dbReference type="AGR" id="HGNC:43793"/>
<dbReference type="neXtProt" id="NX_Q6ZRG5"/>
<dbReference type="InParanoid" id="Q6ZRG5"/>
<dbReference type="PAN-GO" id="Q6ZRG5">
    <property type="GO annotations" value="0 GO annotations based on evolutionary models"/>
</dbReference>
<dbReference type="PhylomeDB" id="Q6ZRG5"/>
<dbReference type="Pharos" id="Q6ZRG5">
    <property type="development level" value="Tdark"/>
</dbReference>
<dbReference type="Proteomes" id="UP000005640">
    <property type="component" value="Unplaced"/>
</dbReference>
<dbReference type="RNAct" id="Q6ZRG5">
    <property type="molecule type" value="protein"/>
</dbReference>
<dbReference type="InterPro" id="IPR015753">
    <property type="entry name" value="LRRC37"/>
</dbReference>
<dbReference type="InterPro" id="IPR032754">
    <property type="entry name" value="LRRC37_N"/>
</dbReference>
<dbReference type="PANTHER" id="PTHR23045:SF9">
    <property type="entry name" value="LEUCINE RICH REPEAT CONTAINING 37A-RELATED"/>
    <property type="match status" value="1"/>
</dbReference>
<dbReference type="PANTHER" id="PTHR23045">
    <property type="entry name" value="LEUCINE-RICH REPEAT-CONTAINING PROTEIN 37A"/>
    <property type="match status" value="1"/>
</dbReference>
<dbReference type="Pfam" id="PF15779">
    <property type="entry name" value="LRRC37"/>
    <property type="match status" value="2"/>
</dbReference>
<protein>
    <recommendedName>
        <fullName>Putative uncharacterized protein FLJ43944</fullName>
    </recommendedName>
</protein>
<sequence>MMRWNFSPEDLSSIFRNNSTLPKITVKNVDIEFTIPTAVTIEVEPSPVQQDNPPISSEQADFSLAQPDSPSLPLESPEESESSAQQEATAQTPNPPKEVEPSPVQQEFPAEPTEPAKEVEPSATQQEASGHPLKSTKEVNPPPKQEIPAQPSEPPEKVELSPVLQQAPTQLLEPLKKVECSPVQQAVPAQSSEPSIVVEPSPVQQIAHLCLQSSLRKWNPL</sequence>
<accession>Q6ZRG5</accession>
<comment type="caution">
    <text evidence="2">Product of a dubious CDS prediction.</text>
</comment>
<name>YQ015_HUMAN</name>
<organism>
    <name type="scientific">Homo sapiens</name>
    <name type="common">Human</name>
    <dbReference type="NCBI Taxonomy" id="9606"/>
    <lineage>
        <taxon>Eukaryota</taxon>
        <taxon>Metazoa</taxon>
        <taxon>Chordata</taxon>
        <taxon>Craniata</taxon>
        <taxon>Vertebrata</taxon>
        <taxon>Euteleostomi</taxon>
        <taxon>Mammalia</taxon>
        <taxon>Eutheria</taxon>
        <taxon>Euarchontoglires</taxon>
        <taxon>Primates</taxon>
        <taxon>Haplorrhini</taxon>
        <taxon>Catarrhini</taxon>
        <taxon>Hominidae</taxon>
        <taxon>Homo</taxon>
    </lineage>
</organism>
<keyword id="KW-1185">Reference proteome</keyword>